<gene>
    <name evidence="1" type="primary">cobS</name>
    <name type="ordered locus">Mlg_2816</name>
</gene>
<proteinExistence type="inferred from homology"/>
<keyword id="KW-0997">Cell inner membrane</keyword>
<keyword id="KW-1003">Cell membrane</keyword>
<keyword id="KW-0169">Cobalamin biosynthesis</keyword>
<keyword id="KW-0460">Magnesium</keyword>
<keyword id="KW-0472">Membrane</keyword>
<keyword id="KW-1185">Reference proteome</keyword>
<keyword id="KW-0808">Transferase</keyword>
<keyword id="KW-0812">Transmembrane</keyword>
<keyword id="KW-1133">Transmembrane helix</keyword>
<name>COBS_ALKEH</name>
<accession>Q0A4T1</accession>
<sequence length="257" mass="26435">MTTAVRGLLLALAFLTRLPVWWLGPPRREDHAASLPAYPVVGLILGILLLALYALLQWFFPDQFVVQAALLVAAWALVTGLLHLDGLGDSADAWLGGHGDRLRSLEIMKDPRSGPAAVAVITLALVVKVAALAALLRLDAALAALLIAPVLGRAAAALLIAGTPYARKQGLAGPLAEAPATRWIGLTALGALLFVTALAGWAGLAAVLGVVAVGVWAQHLMMRRLDGFTGDTAGALVEVAELAALLGLLAVLANSAG</sequence>
<evidence type="ECO:0000255" key="1">
    <source>
        <dbReference type="HAMAP-Rule" id="MF_00719"/>
    </source>
</evidence>
<feature type="chain" id="PRO_1000045756" description="Adenosylcobinamide-GDP ribazoletransferase">
    <location>
        <begin position="1"/>
        <end position="257"/>
    </location>
</feature>
<feature type="transmembrane region" description="Helical" evidence="1">
    <location>
        <begin position="4"/>
        <end position="24"/>
    </location>
</feature>
<feature type="transmembrane region" description="Helical" evidence="1">
    <location>
        <begin position="40"/>
        <end position="60"/>
    </location>
</feature>
<feature type="transmembrane region" description="Helical" evidence="1">
    <location>
        <begin position="64"/>
        <end position="84"/>
    </location>
</feature>
<feature type="transmembrane region" description="Helical" evidence="1">
    <location>
        <begin position="116"/>
        <end position="136"/>
    </location>
</feature>
<feature type="transmembrane region" description="Helical" evidence="1">
    <location>
        <begin position="140"/>
        <end position="160"/>
    </location>
</feature>
<feature type="transmembrane region" description="Helical" evidence="1">
    <location>
        <begin position="193"/>
        <end position="213"/>
    </location>
</feature>
<organism>
    <name type="scientific">Alkalilimnicola ehrlichii (strain ATCC BAA-1101 / DSM 17681 / MLHE-1)</name>
    <dbReference type="NCBI Taxonomy" id="187272"/>
    <lineage>
        <taxon>Bacteria</taxon>
        <taxon>Pseudomonadati</taxon>
        <taxon>Pseudomonadota</taxon>
        <taxon>Gammaproteobacteria</taxon>
        <taxon>Chromatiales</taxon>
        <taxon>Ectothiorhodospiraceae</taxon>
        <taxon>Alkalilimnicola</taxon>
    </lineage>
</organism>
<comment type="function">
    <text evidence="1">Joins adenosylcobinamide-GDP and alpha-ribazole to generate adenosylcobalamin (Ado-cobalamin). Also synthesizes adenosylcobalamin 5'-phosphate from adenosylcobinamide-GDP and alpha-ribazole 5'-phosphate.</text>
</comment>
<comment type="catalytic activity">
    <reaction evidence="1">
        <text>alpha-ribazole + adenosylcob(III)inamide-GDP = adenosylcob(III)alamin + GMP + H(+)</text>
        <dbReference type="Rhea" id="RHEA:16049"/>
        <dbReference type="ChEBI" id="CHEBI:10329"/>
        <dbReference type="ChEBI" id="CHEBI:15378"/>
        <dbReference type="ChEBI" id="CHEBI:18408"/>
        <dbReference type="ChEBI" id="CHEBI:58115"/>
        <dbReference type="ChEBI" id="CHEBI:60487"/>
        <dbReference type="EC" id="2.7.8.26"/>
    </reaction>
</comment>
<comment type="catalytic activity">
    <reaction evidence="1">
        <text>alpha-ribazole 5'-phosphate + adenosylcob(III)inamide-GDP = adenosylcob(III)alamin 5'-phosphate + GMP + H(+)</text>
        <dbReference type="Rhea" id="RHEA:23560"/>
        <dbReference type="ChEBI" id="CHEBI:15378"/>
        <dbReference type="ChEBI" id="CHEBI:57918"/>
        <dbReference type="ChEBI" id="CHEBI:58115"/>
        <dbReference type="ChEBI" id="CHEBI:60487"/>
        <dbReference type="ChEBI" id="CHEBI:60493"/>
        <dbReference type="EC" id="2.7.8.26"/>
    </reaction>
</comment>
<comment type="cofactor">
    <cofactor evidence="1">
        <name>Mg(2+)</name>
        <dbReference type="ChEBI" id="CHEBI:18420"/>
    </cofactor>
</comment>
<comment type="pathway">
    <text evidence="1">Cofactor biosynthesis; adenosylcobalamin biosynthesis; adenosylcobalamin from cob(II)yrinate a,c-diamide: step 7/7.</text>
</comment>
<comment type="subcellular location">
    <subcellularLocation>
        <location evidence="1">Cell inner membrane</location>
        <topology evidence="1">Multi-pass membrane protein</topology>
    </subcellularLocation>
</comment>
<comment type="similarity">
    <text evidence="1">Belongs to the CobS family.</text>
</comment>
<dbReference type="EC" id="2.7.8.26" evidence="1"/>
<dbReference type="EMBL" id="CP000453">
    <property type="protein sequence ID" value="ABI58156.1"/>
    <property type="molecule type" value="Genomic_DNA"/>
</dbReference>
<dbReference type="RefSeq" id="WP_011630549.1">
    <property type="nucleotide sequence ID" value="NC_008340.1"/>
</dbReference>
<dbReference type="KEGG" id="aeh:Mlg_2816"/>
<dbReference type="eggNOG" id="COG0368">
    <property type="taxonomic scope" value="Bacteria"/>
</dbReference>
<dbReference type="HOGENOM" id="CLU_057426_3_1_6"/>
<dbReference type="OrthoDB" id="9794626at2"/>
<dbReference type="UniPathway" id="UPA00148">
    <property type="reaction ID" value="UER00238"/>
</dbReference>
<dbReference type="Proteomes" id="UP000001962">
    <property type="component" value="Chromosome"/>
</dbReference>
<dbReference type="GO" id="GO:0005886">
    <property type="term" value="C:plasma membrane"/>
    <property type="evidence" value="ECO:0007669"/>
    <property type="project" value="UniProtKB-SubCell"/>
</dbReference>
<dbReference type="GO" id="GO:0051073">
    <property type="term" value="F:adenosylcobinamide-GDP ribazoletransferase activity"/>
    <property type="evidence" value="ECO:0007669"/>
    <property type="project" value="UniProtKB-UniRule"/>
</dbReference>
<dbReference type="GO" id="GO:0008818">
    <property type="term" value="F:cobalamin 5'-phosphate synthase activity"/>
    <property type="evidence" value="ECO:0007669"/>
    <property type="project" value="UniProtKB-UniRule"/>
</dbReference>
<dbReference type="GO" id="GO:0009236">
    <property type="term" value="P:cobalamin biosynthetic process"/>
    <property type="evidence" value="ECO:0007669"/>
    <property type="project" value="UniProtKB-UniRule"/>
</dbReference>
<dbReference type="HAMAP" id="MF_00719">
    <property type="entry name" value="CobS"/>
    <property type="match status" value="1"/>
</dbReference>
<dbReference type="InterPro" id="IPR003805">
    <property type="entry name" value="CobS"/>
</dbReference>
<dbReference type="NCBIfam" id="TIGR00317">
    <property type="entry name" value="cobS"/>
    <property type="match status" value="1"/>
</dbReference>
<dbReference type="NCBIfam" id="NF001278">
    <property type="entry name" value="PRK00235.1-5"/>
    <property type="match status" value="1"/>
</dbReference>
<dbReference type="PANTHER" id="PTHR34148">
    <property type="entry name" value="ADENOSYLCOBINAMIDE-GDP RIBAZOLETRANSFERASE"/>
    <property type="match status" value="1"/>
</dbReference>
<dbReference type="PANTHER" id="PTHR34148:SF1">
    <property type="entry name" value="ADENOSYLCOBINAMIDE-GDP RIBAZOLETRANSFERASE"/>
    <property type="match status" value="1"/>
</dbReference>
<dbReference type="Pfam" id="PF02654">
    <property type="entry name" value="CobS"/>
    <property type="match status" value="1"/>
</dbReference>
<reference key="1">
    <citation type="submission" date="2006-08" db="EMBL/GenBank/DDBJ databases">
        <title>Complete sequence of Alkalilimnicola ehrilichei MLHE-1.</title>
        <authorList>
            <person name="Copeland A."/>
            <person name="Lucas S."/>
            <person name="Lapidus A."/>
            <person name="Barry K."/>
            <person name="Detter J.C."/>
            <person name="Glavina del Rio T."/>
            <person name="Hammon N."/>
            <person name="Israni S."/>
            <person name="Dalin E."/>
            <person name="Tice H."/>
            <person name="Pitluck S."/>
            <person name="Sims D."/>
            <person name="Brettin T."/>
            <person name="Bruce D."/>
            <person name="Han C."/>
            <person name="Tapia R."/>
            <person name="Gilna P."/>
            <person name="Schmutz J."/>
            <person name="Larimer F."/>
            <person name="Land M."/>
            <person name="Hauser L."/>
            <person name="Kyrpides N."/>
            <person name="Mikhailova N."/>
            <person name="Oremland R.S."/>
            <person name="Hoeft S.E."/>
            <person name="Switzer-Blum J."/>
            <person name="Kulp T."/>
            <person name="King G."/>
            <person name="Tabita R."/>
            <person name="Witte B."/>
            <person name="Santini J.M."/>
            <person name="Basu P."/>
            <person name="Hollibaugh J.T."/>
            <person name="Xie G."/>
            <person name="Stolz J.F."/>
            <person name="Richardson P."/>
        </authorList>
    </citation>
    <scope>NUCLEOTIDE SEQUENCE [LARGE SCALE GENOMIC DNA]</scope>
    <source>
        <strain>ATCC BAA-1101 / DSM 17681 / MLHE-1</strain>
    </source>
</reference>
<protein>
    <recommendedName>
        <fullName evidence="1">Adenosylcobinamide-GDP ribazoletransferase</fullName>
        <ecNumber evidence="1">2.7.8.26</ecNumber>
    </recommendedName>
    <alternativeName>
        <fullName evidence="1">Cobalamin synthase</fullName>
    </alternativeName>
    <alternativeName>
        <fullName evidence="1">Cobalamin-5'-phosphate synthase</fullName>
    </alternativeName>
</protein>